<sequence length="90" mass="10547">MNIVRHRGIVYCDADFIISHRGEAIKDVVGRYPVLCCYNDVCYDPEREGVYDESNIHELRTIKLNDLDINRYPITRGLLFLTNQIVNAWM</sequence>
<accession>P19295</accession>
<organismHost>
    <name type="scientific">Thermoproteus tenax</name>
    <dbReference type="NCBI Taxonomy" id="2271"/>
</organismHost>
<organism>
    <name type="scientific">Thermoproteus tenax virus 1 (strain KRA1)</name>
    <name type="common">TTV1</name>
    <dbReference type="NCBI Taxonomy" id="10480"/>
    <lineage>
        <taxon>Viruses</taxon>
        <taxon>Adnaviria</taxon>
        <taxon>Zilligvirae</taxon>
        <taxon>Taleaviricota</taxon>
        <taxon>Tokiviricetes</taxon>
        <taxon>Primavirales</taxon>
        <taxon>Tristromaviridae</taxon>
        <taxon>Betatristromavirus</taxon>
        <taxon>Betatristromavirus TTV1</taxon>
    </lineage>
</organism>
<name>YORK_TTV1K</name>
<feature type="chain" id="PRO_0000222977" description="Uncharacterized 10.5 kDa protein">
    <location>
        <begin position="1"/>
        <end position="90"/>
    </location>
</feature>
<proteinExistence type="predicted"/>
<protein>
    <recommendedName>
        <fullName>Uncharacterized 10.5 kDa protein</fullName>
    </recommendedName>
</protein>
<reference key="1">
    <citation type="submission" date="1989-03" db="EMBL/GenBank/DDBJ databases">
        <authorList>
            <person name="Neumann H."/>
        </authorList>
    </citation>
    <scope>NUCLEOTIDE SEQUENCE [GENOMIC DNA]</scope>
</reference>
<keyword id="KW-1185">Reference proteome</keyword>
<dbReference type="EMBL" id="X14855">
    <property type="protein sequence ID" value="CAA32991.1"/>
    <property type="molecule type" value="Genomic_DNA"/>
</dbReference>
<dbReference type="Proteomes" id="UP000009250">
    <property type="component" value="Genome"/>
</dbReference>